<protein>
    <recommendedName>
        <fullName evidence="3">Aconitate hydratase A</fullName>
        <shortName evidence="3">ACN</shortName>
        <shortName evidence="3">Aconitase</shortName>
        <ecNumber evidence="3">4.2.1.3</ecNumber>
    </recommendedName>
    <alternativeName>
        <fullName evidence="3">(2R,3S)-2-methylisocitrate dehydratase</fullName>
    </alternativeName>
    <alternativeName>
        <fullName evidence="3">(2S,3R)-3-hydroxybutane-1,2,3-tricarboxylate dehydratase</fullName>
    </alternativeName>
    <alternativeName>
        <fullName evidence="1">Iron-responsive protein-like</fullName>
        <shortName evidence="1">IRP-like</shortName>
    </alternativeName>
    <alternativeName>
        <fullName evidence="3">Probable 2-methyl-cis-aconitate hydratase</fullName>
        <ecNumber evidence="3">4.2.1.99</ecNumber>
    </alternativeName>
    <alternativeName>
        <fullName evidence="1">RNA-binding protein</fullName>
    </alternativeName>
</protein>
<proteinExistence type="inferred from homology"/>
<dbReference type="EC" id="4.2.1.3" evidence="3"/>
<dbReference type="EC" id="4.2.1.99" evidence="3"/>
<dbReference type="EMBL" id="AM233362">
    <property type="protein sequence ID" value="CAJ80211.1"/>
    <property type="molecule type" value="Genomic_DNA"/>
</dbReference>
<dbReference type="SMR" id="Q2A1K3"/>
<dbReference type="KEGG" id="ftl:FTL_1772"/>
<dbReference type="UniPathway" id="UPA00223">
    <property type="reaction ID" value="UER00718"/>
</dbReference>
<dbReference type="UniPathway" id="UPA00946"/>
<dbReference type="Proteomes" id="UP000001944">
    <property type="component" value="Chromosome"/>
</dbReference>
<dbReference type="GO" id="GO:0047456">
    <property type="term" value="F:2-methylisocitrate dehydratase activity"/>
    <property type="evidence" value="ECO:0007669"/>
    <property type="project" value="UniProtKB-EC"/>
</dbReference>
<dbReference type="GO" id="GO:0051539">
    <property type="term" value="F:4 iron, 4 sulfur cluster binding"/>
    <property type="evidence" value="ECO:0007669"/>
    <property type="project" value="UniProtKB-KW"/>
</dbReference>
<dbReference type="GO" id="GO:0003994">
    <property type="term" value="F:aconitate hydratase activity"/>
    <property type="evidence" value="ECO:0007669"/>
    <property type="project" value="UniProtKB-EC"/>
</dbReference>
<dbReference type="GO" id="GO:0046872">
    <property type="term" value="F:metal ion binding"/>
    <property type="evidence" value="ECO:0007669"/>
    <property type="project" value="UniProtKB-KW"/>
</dbReference>
<dbReference type="GO" id="GO:0003723">
    <property type="term" value="F:RNA binding"/>
    <property type="evidence" value="ECO:0007669"/>
    <property type="project" value="UniProtKB-KW"/>
</dbReference>
<dbReference type="GO" id="GO:0006099">
    <property type="term" value="P:tricarboxylic acid cycle"/>
    <property type="evidence" value="ECO:0007669"/>
    <property type="project" value="UniProtKB-UniPathway"/>
</dbReference>
<dbReference type="CDD" id="cd01586">
    <property type="entry name" value="AcnA_IRP"/>
    <property type="match status" value="1"/>
</dbReference>
<dbReference type="CDD" id="cd01580">
    <property type="entry name" value="AcnA_IRP_Swivel"/>
    <property type="match status" value="1"/>
</dbReference>
<dbReference type="FunFam" id="3.20.19.10:FF:000001">
    <property type="entry name" value="Aconitate hydratase"/>
    <property type="match status" value="1"/>
</dbReference>
<dbReference type="FunFam" id="3.30.499.10:FF:000002">
    <property type="entry name" value="Aconitate hydratase"/>
    <property type="match status" value="1"/>
</dbReference>
<dbReference type="FunFam" id="3.30.499.10:FF:000020">
    <property type="entry name" value="Aconitate hydratase A"/>
    <property type="match status" value="1"/>
</dbReference>
<dbReference type="Gene3D" id="6.10.190.10">
    <property type="match status" value="1"/>
</dbReference>
<dbReference type="Gene3D" id="3.30.499.10">
    <property type="entry name" value="Aconitase, domain 3"/>
    <property type="match status" value="2"/>
</dbReference>
<dbReference type="Gene3D" id="3.20.19.10">
    <property type="entry name" value="Aconitase, domain 4"/>
    <property type="match status" value="1"/>
</dbReference>
<dbReference type="InterPro" id="IPR044137">
    <property type="entry name" value="AcnA_IRP_Swivel"/>
</dbReference>
<dbReference type="InterPro" id="IPR015931">
    <property type="entry name" value="Acnase/IPM_dHydase_lsu_aba_1/3"/>
</dbReference>
<dbReference type="InterPro" id="IPR001030">
    <property type="entry name" value="Acoase/IPM_deHydtase_lsu_aba"/>
</dbReference>
<dbReference type="InterPro" id="IPR015928">
    <property type="entry name" value="Aconitase/3IPM_dehydase_swvl"/>
</dbReference>
<dbReference type="InterPro" id="IPR006249">
    <property type="entry name" value="Aconitase/IRP2"/>
</dbReference>
<dbReference type="InterPro" id="IPR018136">
    <property type="entry name" value="Aconitase_4Fe-4S_BS"/>
</dbReference>
<dbReference type="InterPro" id="IPR036008">
    <property type="entry name" value="Aconitase_4Fe-4S_dom"/>
</dbReference>
<dbReference type="InterPro" id="IPR000573">
    <property type="entry name" value="AconitaseA/IPMdHydase_ssu_swvl"/>
</dbReference>
<dbReference type="NCBIfam" id="TIGR01341">
    <property type="entry name" value="aconitase_1"/>
    <property type="match status" value="1"/>
</dbReference>
<dbReference type="NCBIfam" id="NF006757">
    <property type="entry name" value="PRK09277.1"/>
    <property type="match status" value="1"/>
</dbReference>
<dbReference type="NCBIfam" id="NF009520">
    <property type="entry name" value="PRK12881.1"/>
    <property type="match status" value="1"/>
</dbReference>
<dbReference type="PANTHER" id="PTHR11670">
    <property type="entry name" value="ACONITASE/IRON-RESPONSIVE ELEMENT FAMILY MEMBER"/>
    <property type="match status" value="1"/>
</dbReference>
<dbReference type="Pfam" id="PF00330">
    <property type="entry name" value="Aconitase"/>
    <property type="match status" value="1"/>
</dbReference>
<dbReference type="Pfam" id="PF00694">
    <property type="entry name" value="Aconitase_C"/>
    <property type="match status" value="1"/>
</dbReference>
<dbReference type="PRINTS" id="PR00415">
    <property type="entry name" value="ACONITASE"/>
</dbReference>
<dbReference type="SUPFAM" id="SSF53732">
    <property type="entry name" value="Aconitase iron-sulfur domain"/>
    <property type="match status" value="1"/>
</dbReference>
<dbReference type="SUPFAM" id="SSF52016">
    <property type="entry name" value="LeuD/IlvD-like"/>
    <property type="match status" value="1"/>
</dbReference>
<dbReference type="PROSITE" id="PS00450">
    <property type="entry name" value="ACONITASE_1"/>
    <property type="match status" value="1"/>
</dbReference>
<dbReference type="PROSITE" id="PS01244">
    <property type="entry name" value="ACONITASE_2"/>
    <property type="match status" value="1"/>
</dbReference>
<accession>Q2A1K3</accession>
<organism>
    <name type="scientific">Francisella tularensis subsp. holarctica (strain LVS)</name>
    <dbReference type="NCBI Taxonomy" id="376619"/>
    <lineage>
        <taxon>Bacteria</taxon>
        <taxon>Pseudomonadati</taxon>
        <taxon>Pseudomonadota</taxon>
        <taxon>Gammaproteobacteria</taxon>
        <taxon>Thiotrichales</taxon>
        <taxon>Francisellaceae</taxon>
        <taxon>Francisella</taxon>
    </lineage>
</organism>
<reference key="1">
    <citation type="submission" date="2006-03" db="EMBL/GenBank/DDBJ databases">
        <title>Complete genome sequence of Francisella tularensis LVS (Live Vaccine Strain).</title>
        <authorList>
            <person name="Chain P."/>
            <person name="Larimer F."/>
            <person name="Land M."/>
            <person name="Stilwagen S."/>
            <person name="Larsson P."/>
            <person name="Bearden S."/>
            <person name="Chu M."/>
            <person name="Oyston P."/>
            <person name="Forsman M."/>
            <person name="Andersson S."/>
            <person name="Lindler L."/>
            <person name="Titball R."/>
            <person name="Garcia E."/>
        </authorList>
    </citation>
    <scope>NUCLEOTIDE SEQUENCE [LARGE SCALE GENOMIC DNA]</scope>
    <source>
        <strain>LVS</strain>
    </source>
</reference>
<feature type="chain" id="PRO_0000235166" description="Aconitate hydratase A">
    <location>
        <begin position="1"/>
        <end position="937"/>
    </location>
</feature>
<feature type="region of interest" description="Disordered" evidence="4">
    <location>
        <begin position="898"/>
        <end position="921"/>
    </location>
</feature>
<feature type="binding site" evidence="2">
    <location>
        <position position="439"/>
    </location>
    <ligand>
        <name>[4Fe-4S] cluster</name>
        <dbReference type="ChEBI" id="CHEBI:49883"/>
    </ligand>
</feature>
<feature type="binding site" evidence="2">
    <location>
        <position position="505"/>
    </location>
    <ligand>
        <name>[4Fe-4S] cluster</name>
        <dbReference type="ChEBI" id="CHEBI:49883"/>
    </ligand>
</feature>
<feature type="binding site" evidence="2">
    <location>
        <position position="508"/>
    </location>
    <ligand>
        <name>[4Fe-4S] cluster</name>
        <dbReference type="ChEBI" id="CHEBI:49883"/>
    </ligand>
</feature>
<keyword id="KW-0004">4Fe-4S</keyword>
<keyword id="KW-0408">Iron</keyword>
<keyword id="KW-0411">Iron-sulfur</keyword>
<keyword id="KW-0456">Lyase</keyword>
<keyword id="KW-0479">Metal-binding</keyword>
<keyword id="KW-1185">Reference proteome</keyword>
<keyword id="KW-0694">RNA-binding</keyword>
<keyword id="KW-0816">Tricarboxylic acid cycle</keyword>
<sequence>MSDIKNITKLQIEDKGKKYSLYSLKKLSQELGKDVTRLPYSIRVLLENQLRNIDGYKVKEDDMHKVLDWDAKASSRPEIPHMPARVVMQDFTGVPAVVDLAAMRKAIKDAGGDADKINPLVDTAMVIDHSVQVDFYGTKTALAQNVAKEFERNGERYSLLKWAQKAFDDFIVVPPGMGIIHQVNLEYLAKDALVKNINGEDVIYPDTLVGTDSHTTMINGVGAVGWGVGGIEAEAVMLGQPYYMVLPDVVGVKFTGKLKTGVTATDLVLKVTEVLRKHGVVGKFVEYYGEGLESLSLPDRATIANMTPEYGATIGFFPVDEVTLDFFNNTNRSELVDAAREMYKEQLLFRENPAEEPEYSNIVEIDLSEVESNLAGPKRPQDRVAFHDMKKAFAEALVHEQGLHGFGLTDEQLQKSAEVKGLNERITHGSVAIAAITSCTNTSNPSLLLGAGLLAKKANEKGLKVKPFVKTSLAPGSQVVTQYLEKANLLPELENLGFNLVGYGCTTCIGNSGPLDEPVVEAINEADLIVASVSSGNRNFEGRINPHIKANYLASPIHVVAYALAGTVDFDPVEDAIGKDAEGNDVYLADIWPTTEEIAAIQSHVINSDMFKKAYATVLDGTEEWQKLKAPEGKLYEFDSSSTYIQCPNFFEKFAEGNDDLDIKGARTLLMLGDSVTTDHISPAGAIPEEYPAGQYLKSHGVEKKDFNSYGSRRGNHEVMMRGTFANIRIRNLLLDNVEGGFTKYHLDGSQQYVFDAAMKYKEKGIPLVILAGKEYGTGSSRDWAAKGTFLLGVKAVIAESYERIHRSNLVGMGVLPLEYVNGQNAKTLGLDGTEMFNIKNLNNIKPRQIVIVEAVHPKTAHTTTFEALARLDADVDVDYLKNGGILQTVLKDIMGDKKESKSTQSTTSKGCGSADTSSETSCPFAKIANFFKKLFK</sequence>
<comment type="function">
    <text evidence="1 3">Involved in the catabolism of short chain fatty acids (SCFA) via the tricarboxylic acid (TCA)(acetyl degradation route) and probably the 2-methylcitrate cycle I (propionate degradation route). Catalyzes the reversible isomerization of citrate to isocitrate via cis-aconitate. Could catalyze the hydration of 2-methyl-cis-aconitate to yield (2R,3S)-2-methylisocitrate. The apo form of AcnA functions as a RNA-binding regulatory protein.</text>
</comment>
<comment type="catalytic activity">
    <reaction evidence="3">
        <text>citrate = D-threo-isocitrate</text>
        <dbReference type="Rhea" id="RHEA:10336"/>
        <dbReference type="ChEBI" id="CHEBI:15562"/>
        <dbReference type="ChEBI" id="CHEBI:16947"/>
        <dbReference type="EC" id="4.2.1.3"/>
    </reaction>
</comment>
<comment type="catalytic activity">
    <reaction evidence="3">
        <text>(2S,3R)-3-hydroxybutane-1,2,3-tricarboxylate = 2-methyl-cis-aconitate + H2O</text>
        <dbReference type="Rhea" id="RHEA:17941"/>
        <dbReference type="ChEBI" id="CHEBI:15377"/>
        <dbReference type="ChEBI" id="CHEBI:57429"/>
        <dbReference type="ChEBI" id="CHEBI:57872"/>
        <dbReference type="EC" id="4.2.1.99"/>
    </reaction>
</comment>
<comment type="cofactor">
    <cofactor evidence="1">
        <name>[4Fe-4S] cluster</name>
        <dbReference type="ChEBI" id="CHEBI:49883"/>
    </cofactor>
    <text evidence="1">Binds 1 [4Fe-4S] cluster per subunit.</text>
</comment>
<comment type="pathway">
    <text evidence="3">Carbohydrate metabolism; tricarboxylic acid cycle; isocitrate from oxaloacetate: step 2/2.</text>
</comment>
<comment type="pathway">
    <text evidence="3">Organic acid metabolism; propanoate degradation.</text>
</comment>
<comment type="subunit">
    <text evidence="1">Monomer.</text>
</comment>
<comment type="similarity">
    <text evidence="5">Belongs to the aconitase/IPM isomerase family.</text>
</comment>
<evidence type="ECO:0000250" key="1">
    <source>
        <dbReference type="UniProtKB" id="P09339"/>
    </source>
</evidence>
<evidence type="ECO:0000250" key="2">
    <source>
        <dbReference type="UniProtKB" id="P36683"/>
    </source>
</evidence>
<evidence type="ECO:0000250" key="3">
    <source>
        <dbReference type="UniProtKB" id="Q8ZP52"/>
    </source>
</evidence>
<evidence type="ECO:0000256" key="4">
    <source>
        <dbReference type="SAM" id="MobiDB-lite"/>
    </source>
</evidence>
<evidence type="ECO:0000305" key="5"/>
<name>ACNA_FRATH</name>
<gene>
    <name type="primary">acn</name>
    <name type="ordered locus">FTL_1772</name>
</gene>